<organism>
    <name type="scientific">Oceanobacillus iheyensis (strain DSM 14371 / CIP 107618 / JCM 11309 / KCTC 3954 / HTE831)</name>
    <dbReference type="NCBI Taxonomy" id="221109"/>
    <lineage>
        <taxon>Bacteria</taxon>
        <taxon>Bacillati</taxon>
        <taxon>Bacillota</taxon>
        <taxon>Bacilli</taxon>
        <taxon>Bacillales</taxon>
        <taxon>Bacillaceae</taxon>
        <taxon>Oceanobacillus</taxon>
    </lineage>
</organism>
<dbReference type="EC" id="2.5.1.16" evidence="1"/>
<dbReference type="EMBL" id="BA000028">
    <property type="protein sequence ID" value="BAC12899.1"/>
    <property type="molecule type" value="Genomic_DNA"/>
</dbReference>
<dbReference type="RefSeq" id="WP_011065345.1">
    <property type="nucleotide sequence ID" value="NC_004193.1"/>
</dbReference>
<dbReference type="SMR" id="Q8CV14"/>
<dbReference type="STRING" id="221109.gene:10733181"/>
<dbReference type="KEGG" id="oih:OB0943"/>
<dbReference type="eggNOG" id="COG4262">
    <property type="taxonomic scope" value="Bacteria"/>
</dbReference>
<dbReference type="HOGENOM" id="CLU_034289_1_0_9"/>
<dbReference type="OrthoDB" id="9793120at2"/>
<dbReference type="PhylomeDB" id="Q8CV14"/>
<dbReference type="UniPathway" id="UPA00248">
    <property type="reaction ID" value="UER00314"/>
</dbReference>
<dbReference type="Proteomes" id="UP000000822">
    <property type="component" value="Chromosome"/>
</dbReference>
<dbReference type="GO" id="GO:0005886">
    <property type="term" value="C:plasma membrane"/>
    <property type="evidence" value="ECO:0007669"/>
    <property type="project" value="UniProtKB-SubCell"/>
</dbReference>
<dbReference type="GO" id="GO:0004766">
    <property type="term" value="F:spermidine synthase activity"/>
    <property type="evidence" value="ECO:0007669"/>
    <property type="project" value="UniProtKB-UniRule"/>
</dbReference>
<dbReference type="GO" id="GO:0010487">
    <property type="term" value="F:thermospermine synthase activity"/>
    <property type="evidence" value="ECO:0007669"/>
    <property type="project" value="UniProtKB-ARBA"/>
</dbReference>
<dbReference type="GO" id="GO:0008295">
    <property type="term" value="P:spermidine biosynthetic process"/>
    <property type="evidence" value="ECO:0007669"/>
    <property type="project" value="UniProtKB-UniRule"/>
</dbReference>
<dbReference type="CDD" id="cd02440">
    <property type="entry name" value="AdoMet_MTases"/>
    <property type="match status" value="1"/>
</dbReference>
<dbReference type="FunFam" id="3.40.50.150:FF:000088">
    <property type="entry name" value="Polyamine aminopropyltransferase"/>
    <property type="match status" value="1"/>
</dbReference>
<dbReference type="Gene3D" id="3.40.50.150">
    <property type="entry name" value="Vaccinia Virus protein VP39"/>
    <property type="match status" value="1"/>
</dbReference>
<dbReference type="HAMAP" id="MF_00198">
    <property type="entry name" value="Spermidine_synth"/>
    <property type="match status" value="1"/>
</dbReference>
<dbReference type="InterPro" id="IPR030374">
    <property type="entry name" value="PABS"/>
</dbReference>
<dbReference type="InterPro" id="IPR030373">
    <property type="entry name" value="PABS_CS"/>
</dbReference>
<dbReference type="InterPro" id="IPR029063">
    <property type="entry name" value="SAM-dependent_MTases_sf"/>
</dbReference>
<dbReference type="InterPro" id="IPR001045">
    <property type="entry name" value="Spermi_synthase"/>
</dbReference>
<dbReference type="NCBIfam" id="NF037959">
    <property type="entry name" value="MFS_SpdSyn"/>
    <property type="match status" value="1"/>
</dbReference>
<dbReference type="NCBIfam" id="NF002956">
    <property type="entry name" value="PRK03612.1"/>
    <property type="match status" value="1"/>
</dbReference>
<dbReference type="PANTHER" id="PTHR43317">
    <property type="entry name" value="THERMOSPERMINE SYNTHASE ACAULIS5"/>
    <property type="match status" value="1"/>
</dbReference>
<dbReference type="PANTHER" id="PTHR43317:SF1">
    <property type="entry name" value="THERMOSPERMINE SYNTHASE ACAULIS5"/>
    <property type="match status" value="1"/>
</dbReference>
<dbReference type="Pfam" id="PF01564">
    <property type="entry name" value="Spermine_synth"/>
    <property type="match status" value="1"/>
</dbReference>
<dbReference type="SUPFAM" id="SSF53335">
    <property type="entry name" value="S-adenosyl-L-methionine-dependent methyltransferases"/>
    <property type="match status" value="1"/>
</dbReference>
<dbReference type="PROSITE" id="PS01330">
    <property type="entry name" value="PABS_1"/>
    <property type="match status" value="1"/>
</dbReference>
<dbReference type="PROSITE" id="PS51006">
    <property type="entry name" value="PABS_2"/>
    <property type="match status" value="1"/>
</dbReference>
<evidence type="ECO:0000255" key="1">
    <source>
        <dbReference type="HAMAP-Rule" id="MF_00198"/>
    </source>
</evidence>
<sequence>MLNDKAIRQSKIIYWSSGIVSICGIIFEVLFGALGSYILGDGVKQYTLTISLFLTGMGIGASLSEKFMRNLIIKFVWIEFCVALIGGFSSFIMFGITAFAPAGTDAFYLYSITLIIGALTGVELPILIRKANEIGVTLNKSTARVLFSDYAGGLIGGVLFVFLFRPYFGMVKTAFLVGLINLTVALIVLWLFRKEIRHFIVHAVIGGVIGVLLIAGLFFGEEMAFNFEQKLYQDPIIHMEESSYQKITVTQDEKDIRLYLDGSLQFSSVDEHRYHEVLVHPAMANVETPENVLILGGGDGIAAKEVLKYQDVKQVTLVDLDPAVVELANENRHLLEINEGALMDEKVEVKNMDAFQFLEDTSEWYDVILVDLPDPNNESLNKLYTKEFYSLVRNHLKPEGTLMVQATSPVFAREVYWTISETISSTNLNTENLHVDVPSFGNWGFVMASREEIDLDIMEIPVSTRFLTDDMMPALTAFGKDEDQQIPNFELKANTLIDPHLIQIYEKAWENY</sequence>
<protein>
    <recommendedName>
        <fullName evidence="1">Polyamine aminopropyltransferase</fullName>
    </recommendedName>
    <alternativeName>
        <fullName evidence="1">Putrescine aminopropyltransferase</fullName>
        <shortName evidence="1">PAPT</shortName>
    </alternativeName>
    <alternativeName>
        <fullName evidence="1">Spermidine synthase</fullName>
        <shortName evidence="1">SPDS</shortName>
        <shortName evidence="1">SPDSY</shortName>
        <ecNumber evidence="1">2.5.1.16</ecNumber>
    </alternativeName>
</protein>
<accession>Q8CV14</accession>
<name>SPEE_OCEIH</name>
<reference key="1">
    <citation type="journal article" date="2002" name="Nucleic Acids Res.">
        <title>Genome sequence of Oceanobacillus iheyensis isolated from the Iheya Ridge and its unexpected adaptive capabilities to extreme environments.</title>
        <authorList>
            <person name="Takami H."/>
            <person name="Takaki Y."/>
            <person name="Uchiyama I."/>
        </authorList>
    </citation>
    <scope>NUCLEOTIDE SEQUENCE [LARGE SCALE GENOMIC DNA]</scope>
    <source>
        <strain>DSM 14371 / CIP 107618 / JCM 11309 / KCTC 3954 / HTE831</strain>
    </source>
</reference>
<gene>
    <name evidence="1" type="primary">speE</name>
    <name type="ordered locus">OB0943</name>
</gene>
<keyword id="KW-1003">Cell membrane</keyword>
<keyword id="KW-0472">Membrane</keyword>
<keyword id="KW-0620">Polyamine biosynthesis</keyword>
<keyword id="KW-1185">Reference proteome</keyword>
<keyword id="KW-0745">Spermidine biosynthesis</keyword>
<keyword id="KW-0808">Transferase</keyword>
<keyword id="KW-0812">Transmembrane</keyword>
<keyword id="KW-1133">Transmembrane helix</keyword>
<comment type="function">
    <text evidence="1">Catalyzes the irreversible transfer of a propylamine group from the amino donor S-adenosylmethioninamine (decarboxy-AdoMet) to putrescine (1,4-diaminobutane) to yield spermidine.</text>
</comment>
<comment type="catalytic activity">
    <reaction evidence="1">
        <text>S-adenosyl 3-(methylsulfanyl)propylamine + putrescine = S-methyl-5'-thioadenosine + spermidine + H(+)</text>
        <dbReference type="Rhea" id="RHEA:12721"/>
        <dbReference type="ChEBI" id="CHEBI:15378"/>
        <dbReference type="ChEBI" id="CHEBI:17509"/>
        <dbReference type="ChEBI" id="CHEBI:57443"/>
        <dbReference type="ChEBI" id="CHEBI:57834"/>
        <dbReference type="ChEBI" id="CHEBI:326268"/>
        <dbReference type="EC" id="2.5.1.16"/>
    </reaction>
</comment>
<comment type="pathway">
    <text evidence="1">Amine and polyamine biosynthesis; spermidine biosynthesis; spermidine from putrescine: step 1/1.</text>
</comment>
<comment type="subunit">
    <text evidence="1">Homodimer or homotetramer.</text>
</comment>
<comment type="subcellular location">
    <subcellularLocation>
        <location evidence="1">Cell membrane</location>
        <topology evidence="1">Multi-pass membrane protein</topology>
    </subcellularLocation>
</comment>
<comment type="similarity">
    <text evidence="1">Belongs to the spermidine/spermine synthase family.</text>
</comment>
<proteinExistence type="inferred from homology"/>
<feature type="chain" id="PRO_0000156492" description="Polyamine aminopropyltransferase">
    <location>
        <begin position="1"/>
        <end position="512"/>
    </location>
</feature>
<feature type="transmembrane region" description="Helical" evidence="1">
    <location>
        <begin position="19"/>
        <end position="39"/>
    </location>
</feature>
<feature type="transmembrane region" description="Helical" evidence="1">
    <location>
        <begin position="48"/>
        <end position="68"/>
    </location>
</feature>
<feature type="transmembrane region" description="Helical" evidence="1">
    <location>
        <begin position="76"/>
        <end position="96"/>
    </location>
</feature>
<feature type="transmembrane region" description="Helical" evidence="1">
    <location>
        <begin position="108"/>
        <end position="128"/>
    </location>
</feature>
<feature type="transmembrane region" description="Helical" evidence="1">
    <location>
        <begin position="151"/>
        <end position="171"/>
    </location>
</feature>
<feature type="transmembrane region" description="Helical" evidence="1">
    <location>
        <begin position="172"/>
        <end position="192"/>
    </location>
</feature>
<feature type="transmembrane region" description="Helical" evidence="1">
    <location>
        <begin position="199"/>
        <end position="219"/>
    </location>
</feature>
<feature type="domain" description="PABS" evidence="1">
    <location>
        <begin position="215"/>
        <end position="450"/>
    </location>
</feature>
<feature type="region of interest" description="Spermidine synthase">
    <location>
        <begin position="217"/>
        <end position="457"/>
    </location>
</feature>
<feature type="active site" description="Proton acceptor" evidence="1">
    <location>
        <position position="371"/>
    </location>
</feature>
<feature type="binding site" evidence="1">
    <location>
        <position position="245"/>
    </location>
    <ligand>
        <name>S-methyl-5'-thioadenosine</name>
        <dbReference type="ChEBI" id="CHEBI:17509"/>
    </ligand>
</feature>
<feature type="binding site" evidence="1">
    <location>
        <position position="275"/>
    </location>
    <ligand>
        <name>spermidine</name>
        <dbReference type="ChEBI" id="CHEBI:57834"/>
    </ligand>
</feature>
<feature type="binding site" evidence="1">
    <location>
        <position position="299"/>
    </location>
    <ligand>
        <name>spermidine</name>
        <dbReference type="ChEBI" id="CHEBI:57834"/>
    </ligand>
</feature>
<feature type="binding site" evidence="1">
    <location>
        <position position="319"/>
    </location>
    <ligand>
        <name>S-methyl-5'-thioadenosine</name>
        <dbReference type="ChEBI" id="CHEBI:17509"/>
    </ligand>
</feature>
<feature type="binding site" evidence="1">
    <location>
        <begin position="353"/>
        <end position="354"/>
    </location>
    <ligand>
        <name>S-methyl-5'-thioadenosine</name>
        <dbReference type="ChEBI" id="CHEBI:17509"/>
    </ligand>
</feature>